<evidence type="ECO:0000250" key="1">
    <source>
        <dbReference type="UniProtKB" id="Q5HH30"/>
    </source>
</evidence>
<evidence type="ECO:0000250" key="2">
    <source>
        <dbReference type="UniProtKB" id="Q9I0Q8"/>
    </source>
</evidence>
<evidence type="ECO:0000255" key="3">
    <source>
        <dbReference type="PROSITE-ProRule" id="PRU00532"/>
    </source>
</evidence>
<evidence type="ECO:0000305" key="4"/>
<protein>
    <recommendedName>
        <fullName evidence="1">Putative acetyltransferase BSU40680</fullName>
        <ecNumber>2.3.1.-</ecNumber>
    </recommendedName>
    <alternativeName>
        <fullName evidence="1">GCN5-related N-acetyltransferase</fullName>
        <shortName evidence="1">GNAT</shortName>
    </alternativeName>
</protein>
<name>ATSE_BACSU</name>
<feature type="chain" id="PRO_0000201919" description="Putative acetyltransferase BSU40680">
    <location>
        <begin position="1"/>
        <end position="147"/>
    </location>
</feature>
<feature type="domain" description="N-acetyltransferase" evidence="3">
    <location>
        <begin position="1"/>
        <end position="144"/>
    </location>
</feature>
<feature type="binding site" evidence="2">
    <location>
        <begin position="74"/>
        <end position="76"/>
    </location>
    <ligand>
        <name>CoA</name>
        <dbReference type="ChEBI" id="CHEBI:57287"/>
    </ligand>
</feature>
<feature type="binding site" evidence="2">
    <location>
        <begin position="115"/>
        <end position="117"/>
    </location>
    <ligand>
        <name>CoA</name>
        <dbReference type="ChEBI" id="CHEBI:57287"/>
    </ligand>
</feature>
<sequence>MNVKKITSEQDLHTAFEIRKAVFVEEQGCPISDEFDEFDTLHGDCQHILAYHQNVPVGTARVRIVGHTGKLERICILKSYRKFGLGKVIVDALERIVKEQGISAFKLHGQTQAAGFYEKLGYRTASEEFMLDGIPHVLMTKQDDSAL</sequence>
<organism>
    <name type="scientific">Bacillus subtilis (strain 168)</name>
    <dbReference type="NCBI Taxonomy" id="224308"/>
    <lineage>
        <taxon>Bacteria</taxon>
        <taxon>Bacillati</taxon>
        <taxon>Bacillota</taxon>
        <taxon>Bacilli</taxon>
        <taxon>Bacillales</taxon>
        <taxon>Bacillaceae</taxon>
        <taxon>Bacillus</taxon>
    </lineage>
</organism>
<proteinExistence type="inferred from homology"/>
<comment type="function">
    <text evidence="1">Could catalyze the transfer of an acetyl group from acetyl coenzyme A (AcCoA) to an acceptor substrate and release both CoA and the acetylated product.</text>
</comment>
<comment type="similarity">
    <text evidence="4">Belongs to the UPF0039 (ElaA) family.</text>
</comment>
<gene>
    <name type="primary">yybD</name>
    <name type="ordered locus">BSU40680</name>
</gene>
<accession>P37500</accession>
<dbReference type="EC" id="2.3.1.-"/>
<dbReference type="EMBL" id="D26185">
    <property type="protein sequence ID" value="BAA05199.1"/>
    <property type="molecule type" value="Genomic_DNA"/>
</dbReference>
<dbReference type="EMBL" id="AL009126">
    <property type="protein sequence ID" value="CAB16105.1"/>
    <property type="molecule type" value="Genomic_DNA"/>
</dbReference>
<dbReference type="PIR" id="S65993">
    <property type="entry name" value="S65993"/>
</dbReference>
<dbReference type="RefSeq" id="NP_391948.1">
    <property type="nucleotide sequence ID" value="NC_000964.3"/>
</dbReference>
<dbReference type="RefSeq" id="WP_003226881.1">
    <property type="nucleotide sequence ID" value="NZ_OZ025638.1"/>
</dbReference>
<dbReference type="SMR" id="P37500"/>
<dbReference type="FunCoup" id="P37500">
    <property type="interactions" value="326"/>
</dbReference>
<dbReference type="STRING" id="224308.BSU40680"/>
<dbReference type="PaxDb" id="224308-BSU40680"/>
<dbReference type="EnsemblBacteria" id="CAB16105">
    <property type="protein sequence ID" value="CAB16105"/>
    <property type="gene ID" value="BSU_40680"/>
</dbReference>
<dbReference type="GeneID" id="938072"/>
<dbReference type="KEGG" id="bsu:BSU40680"/>
<dbReference type="PATRIC" id="fig|224308.179.peg.4410"/>
<dbReference type="eggNOG" id="COG2153">
    <property type="taxonomic scope" value="Bacteria"/>
</dbReference>
<dbReference type="InParanoid" id="P37500"/>
<dbReference type="OrthoDB" id="9796171at2"/>
<dbReference type="PhylomeDB" id="P37500"/>
<dbReference type="BioCyc" id="BSUB:BSU40680-MONOMER"/>
<dbReference type="Proteomes" id="UP000001570">
    <property type="component" value="Chromosome"/>
</dbReference>
<dbReference type="GO" id="GO:0016747">
    <property type="term" value="F:acyltransferase activity, transferring groups other than amino-acyl groups"/>
    <property type="evidence" value="ECO:0000250"/>
    <property type="project" value="UniProtKB"/>
</dbReference>
<dbReference type="GO" id="GO:0008080">
    <property type="term" value="F:N-acetyltransferase activity"/>
    <property type="evidence" value="ECO:0000318"/>
    <property type="project" value="GO_Central"/>
</dbReference>
<dbReference type="CDD" id="cd04301">
    <property type="entry name" value="NAT_SF"/>
    <property type="match status" value="1"/>
</dbReference>
<dbReference type="Gene3D" id="3.40.630.30">
    <property type="match status" value="1"/>
</dbReference>
<dbReference type="InterPro" id="IPR016181">
    <property type="entry name" value="Acyl_CoA_acyltransferase"/>
</dbReference>
<dbReference type="InterPro" id="IPR000182">
    <property type="entry name" value="GNAT_dom"/>
</dbReference>
<dbReference type="InterPro" id="IPR039143">
    <property type="entry name" value="GNPNAT1-like"/>
</dbReference>
<dbReference type="PANTHER" id="PTHR13355:SF9">
    <property type="entry name" value="ACETYLTRANSFERASE BSU40680-RELATED"/>
    <property type="match status" value="1"/>
</dbReference>
<dbReference type="PANTHER" id="PTHR13355">
    <property type="entry name" value="GLUCOSAMINE 6-PHOSPHATE N-ACETYLTRANSFERASE"/>
    <property type="match status" value="1"/>
</dbReference>
<dbReference type="Pfam" id="PF13673">
    <property type="entry name" value="Acetyltransf_10"/>
    <property type="match status" value="1"/>
</dbReference>
<dbReference type="SUPFAM" id="SSF55729">
    <property type="entry name" value="Acyl-CoA N-acyltransferases (Nat)"/>
    <property type="match status" value="1"/>
</dbReference>
<dbReference type="PROSITE" id="PS51186">
    <property type="entry name" value="GNAT"/>
    <property type="match status" value="1"/>
</dbReference>
<reference key="1">
    <citation type="journal article" date="1994" name="DNA Res.">
        <title>Systematic sequencing of the 180 kilobase region of the Bacillus subtilis chromosome containing the replication origin.</title>
        <authorList>
            <person name="Ogasawara N."/>
            <person name="Nakai S."/>
            <person name="Yoshikawa H."/>
        </authorList>
    </citation>
    <scope>NUCLEOTIDE SEQUENCE [GENOMIC DNA]</scope>
    <source>
        <strain>168</strain>
    </source>
</reference>
<reference key="2">
    <citation type="journal article" date="1997" name="Nature">
        <title>The complete genome sequence of the Gram-positive bacterium Bacillus subtilis.</title>
        <authorList>
            <person name="Kunst F."/>
            <person name="Ogasawara N."/>
            <person name="Moszer I."/>
            <person name="Albertini A.M."/>
            <person name="Alloni G."/>
            <person name="Azevedo V."/>
            <person name="Bertero M.G."/>
            <person name="Bessieres P."/>
            <person name="Bolotin A."/>
            <person name="Borchert S."/>
            <person name="Borriss R."/>
            <person name="Boursier L."/>
            <person name="Brans A."/>
            <person name="Braun M."/>
            <person name="Brignell S.C."/>
            <person name="Bron S."/>
            <person name="Brouillet S."/>
            <person name="Bruschi C.V."/>
            <person name="Caldwell B."/>
            <person name="Capuano V."/>
            <person name="Carter N.M."/>
            <person name="Choi S.-K."/>
            <person name="Codani J.-J."/>
            <person name="Connerton I.F."/>
            <person name="Cummings N.J."/>
            <person name="Daniel R.A."/>
            <person name="Denizot F."/>
            <person name="Devine K.M."/>
            <person name="Duesterhoeft A."/>
            <person name="Ehrlich S.D."/>
            <person name="Emmerson P.T."/>
            <person name="Entian K.-D."/>
            <person name="Errington J."/>
            <person name="Fabret C."/>
            <person name="Ferrari E."/>
            <person name="Foulger D."/>
            <person name="Fritz C."/>
            <person name="Fujita M."/>
            <person name="Fujita Y."/>
            <person name="Fuma S."/>
            <person name="Galizzi A."/>
            <person name="Galleron N."/>
            <person name="Ghim S.-Y."/>
            <person name="Glaser P."/>
            <person name="Goffeau A."/>
            <person name="Golightly E.J."/>
            <person name="Grandi G."/>
            <person name="Guiseppi G."/>
            <person name="Guy B.J."/>
            <person name="Haga K."/>
            <person name="Haiech J."/>
            <person name="Harwood C.R."/>
            <person name="Henaut A."/>
            <person name="Hilbert H."/>
            <person name="Holsappel S."/>
            <person name="Hosono S."/>
            <person name="Hullo M.-F."/>
            <person name="Itaya M."/>
            <person name="Jones L.-M."/>
            <person name="Joris B."/>
            <person name="Karamata D."/>
            <person name="Kasahara Y."/>
            <person name="Klaerr-Blanchard M."/>
            <person name="Klein C."/>
            <person name="Kobayashi Y."/>
            <person name="Koetter P."/>
            <person name="Koningstein G."/>
            <person name="Krogh S."/>
            <person name="Kumano M."/>
            <person name="Kurita K."/>
            <person name="Lapidus A."/>
            <person name="Lardinois S."/>
            <person name="Lauber J."/>
            <person name="Lazarevic V."/>
            <person name="Lee S.-M."/>
            <person name="Levine A."/>
            <person name="Liu H."/>
            <person name="Masuda S."/>
            <person name="Mauel C."/>
            <person name="Medigue C."/>
            <person name="Medina N."/>
            <person name="Mellado R.P."/>
            <person name="Mizuno M."/>
            <person name="Moestl D."/>
            <person name="Nakai S."/>
            <person name="Noback M."/>
            <person name="Noone D."/>
            <person name="O'Reilly M."/>
            <person name="Ogawa K."/>
            <person name="Ogiwara A."/>
            <person name="Oudega B."/>
            <person name="Park S.-H."/>
            <person name="Parro V."/>
            <person name="Pohl T.M."/>
            <person name="Portetelle D."/>
            <person name="Porwollik S."/>
            <person name="Prescott A.M."/>
            <person name="Presecan E."/>
            <person name="Pujic P."/>
            <person name="Purnelle B."/>
            <person name="Rapoport G."/>
            <person name="Rey M."/>
            <person name="Reynolds S."/>
            <person name="Rieger M."/>
            <person name="Rivolta C."/>
            <person name="Rocha E."/>
            <person name="Roche B."/>
            <person name="Rose M."/>
            <person name="Sadaie Y."/>
            <person name="Sato T."/>
            <person name="Scanlan E."/>
            <person name="Schleich S."/>
            <person name="Schroeter R."/>
            <person name="Scoffone F."/>
            <person name="Sekiguchi J."/>
            <person name="Sekowska A."/>
            <person name="Seror S.J."/>
            <person name="Serror P."/>
            <person name="Shin B.-S."/>
            <person name="Soldo B."/>
            <person name="Sorokin A."/>
            <person name="Tacconi E."/>
            <person name="Takagi T."/>
            <person name="Takahashi H."/>
            <person name="Takemaru K."/>
            <person name="Takeuchi M."/>
            <person name="Tamakoshi A."/>
            <person name="Tanaka T."/>
            <person name="Terpstra P."/>
            <person name="Tognoni A."/>
            <person name="Tosato V."/>
            <person name="Uchiyama S."/>
            <person name="Vandenbol M."/>
            <person name="Vannier F."/>
            <person name="Vassarotti A."/>
            <person name="Viari A."/>
            <person name="Wambutt R."/>
            <person name="Wedler E."/>
            <person name="Wedler H."/>
            <person name="Weitzenegger T."/>
            <person name="Winters P."/>
            <person name="Wipat A."/>
            <person name="Yamamoto H."/>
            <person name="Yamane K."/>
            <person name="Yasumoto K."/>
            <person name="Yata K."/>
            <person name="Yoshida K."/>
            <person name="Yoshikawa H.-F."/>
            <person name="Zumstein E."/>
            <person name="Yoshikawa H."/>
            <person name="Danchin A."/>
        </authorList>
    </citation>
    <scope>NUCLEOTIDE SEQUENCE [LARGE SCALE GENOMIC DNA]</scope>
    <source>
        <strain>168</strain>
    </source>
</reference>
<keyword id="KW-0012">Acyltransferase</keyword>
<keyword id="KW-1185">Reference proteome</keyword>
<keyword id="KW-0808">Transferase</keyword>